<organism>
    <name type="scientific">Homo sapiens</name>
    <name type="common">Human</name>
    <dbReference type="NCBI Taxonomy" id="9606"/>
    <lineage>
        <taxon>Eukaryota</taxon>
        <taxon>Metazoa</taxon>
        <taxon>Chordata</taxon>
        <taxon>Craniata</taxon>
        <taxon>Vertebrata</taxon>
        <taxon>Euteleostomi</taxon>
        <taxon>Mammalia</taxon>
        <taxon>Eutheria</taxon>
        <taxon>Euarchontoglires</taxon>
        <taxon>Primates</taxon>
        <taxon>Haplorrhini</taxon>
        <taxon>Catarrhini</taxon>
        <taxon>Hominidae</taxon>
        <taxon>Homo</taxon>
    </lineage>
</organism>
<evidence type="ECO:0000250" key="1"/>
<evidence type="ECO:0000255" key="2"/>
<evidence type="ECO:0000255" key="3">
    <source>
        <dbReference type="PROSITE-ProRule" id="PRU00521"/>
    </source>
</evidence>
<evidence type="ECO:0000269" key="4">
    <source>
    </source>
</evidence>
<evidence type="ECO:0000305" key="5"/>
<feature type="chain" id="PRO_0000325896" description="Putative vomeronasal receptor-like protein 4">
    <location>
        <begin position="1"/>
        <end position="208"/>
    </location>
</feature>
<feature type="topological domain" description="Extracellular" evidence="2">
    <location>
        <begin position="1"/>
        <end position="19"/>
    </location>
</feature>
<feature type="transmembrane region" description="Helical" evidence="2">
    <location>
        <begin position="20"/>
        <end position="40"/>
    </location>
</feature>
<feature type="topological domain" description="Cytoplasmic" evidence="2">
    <location>
        <begin position="41"/>
        <end position="48"/>
    </location>
</feature>
<feature type="transmembrane region" description="Helical" evidence="2">
    <location>
        <begin position="49"/>
        <end position="69"/>
    </location>
</feature>
<feature type="topological domain" description="Extracellular" evidence="2">
    <location>
        <begin position="70"/>
        <end position="97"/>
    </location>
</feature>
<feature type="transmembrane region" description="Helical" evidence="2">
    <location>
        <begin position="98"/>
        <end position="118"/>
    </location>
</feature>
<feature type="topological domain" description="Cytoplasmic" evidence="2">
    <location>
        <begin position="119"/>
        <end position="135"/>
    </location>
</feature>
<feature type="transmembrane region" description="Helical" evidence="2">
    <location>
        <begin position="136"/>
        <end position="156"/>
    </location>
</feature>
<feature type="topological domain" description="Extracellular" evidence="2">
    <location>
        <begin position="157"/>
        <end position="183"/>
    </location>
</feature>
<feature type="transmembrane region" description="Helical" evidence="2">
    <location>
        <begin position="184"/>
        <end position="204"/>
    </location>
</feature>
<feature type="topological domain" description="Cytoplasmic" evidence="2">
    <location>
        <begin position="205"/>
        <end position="208"/>
    </location>
</feature>
<feature type="disulfide bond" evidence="3">
    <location>
        <begin position="86"/>
        <end position="173"/>
    </location>
</feature>
<proteinExistence type="uncertain"/>
<keyword id="KW-1003">Cell membrane</keyword>
<keyword id="KW-1015">Disulfide bond</keyword>
<keyword id="KW-0297">G-protein coupled receptor</keyword>
<keyword id="KW-0472">Membrane</keyword>
<keyword id="KW-0589">Pheromone response</keyword>
<keyword id="KW-0675">Receptor</keyword>
<keyword id="KW-1185">Reference proteome</keyword>
<keyword id="KW-0807">Transducer</keyword>
<keyword id="KW-0812">Transmembrane</keyword>
<keyword id="KW-1133">Transmembrane helix</keyword>
<name>VNRL4_HUMAN</name>
<accession>Q8TDU5</accession>
<gene>
    <name type="primary">VN1R17P</name>
    <name type="synonym">VNRL4</name>
</gene>
<sequence>MEMTKLFSYIVIKNVYYPQVSFGISANTFLLLFHIFTFAYTHRLKPIDMTISHLPLIHILLLFTQAILVSSDLFESWNIQNNDLKCKIITFLNRVMRGVSICTTCLLSVLQAITISPSTSFLEKFKHISANHTLGFILFSWVLNMFITNNLLLFIVPTPNRIGASLLFVTEHCYVLPMSYTHRSLFFILMVLRDVIFIGLMVLSSGYG</sequence>
<dbReference type="EMBL" id="AB083605">
    <property type="protein sequence ID" value="BAB89318.1"/>
    <property type="molecule type" value="Genomic_DNA"/>
</dbReference>
<dbReference type="SMR" id="Q8TDU5"/>
<dbReference type="BioMuta" id="HGNC:37331"/>
<dbReference type="DMDM" id="74760485"/>
<dbReference type="AGR" id="HGNC:37331"/>
<dbReference type="GeneCards" id="VN1R17P"/>
<dbReference type="HGNC" id="HGNC:37331">
    <property type="gene designation" value="VN1R17P"/>
</dbReference>
<dbReference type="neXtProt" id="NX_Q8TDU5"/>
<dbReference type="InParanoid" id="Q8TDU5"/>
<dbReference type="PAN-GO" id="Q8TDU5">
    <property type="GO annotations" value="0 GO annotations based on evolutionary models"/>
</dbReference>
<dbReference type="PhylomeDB" id="Q8TDU5"/>
<dbReference type="Pharos" id="Q8TDU5">
    <property type="development level" value="Tdark"/>
</dbReference>
<dbReference type="Proteomes" id="UP000005640">
    <property type="component" value="Unplaced"/>
</dbReference>
<dbReference type="RNAct" id="Q8TDU5">
    <property type="molecule type" value="protein"/>
</dbReference>
<dbReference type="GO" id="GO:0005886">
    <property type="term" value="C:plasma membrane"/>
    <property type="evidence" value="ECO:0007669"/>
    <property type="project" value="UniProtKB-SubCell"/>
</dbReference>
<dbReference type="GO" id="GO:0016503">
    <property type="term" value="F:pheromone receptor activity"/>
    <property type="evidence" value="ECO:0007669"/>
    <property type="project" value="InterPro"/>
</dbReference>
<dbReference type="GO" id="GO:0019236">
    <property type="term" value="P:response to pheromone"/>
    <property type="evidence" value="ECO:0007669"/>
    <property type="project" value="UniProtKB-KW"/>
</dbReference>
<dbReference type="GO" id="GO:0007606">
    <property type="term" value="P:sensory perception of chemical stimulus"/>
    <property type="evidence" value="ECO:0007669"/>
    <property type="project" value="UniProtKB-ARBA"/>
</dbReference>
<dbReference type="Gene3D" id="1.20.1070.10">
    <property type="entry name" value="Rhodopsin 7-helix transmembrane proteins"/>
    <property type="match status" value="1"/>
</dbReference>
<dbReference type="InterPro" id="IPR017452">
    <property type="entry name" value="GPCR_Rhodpsn_7TM"/>
</dbReference>
<dbReference type="InterPro" id="IPR004072">
    <property type="entry name" value="Vmron_rcpt_1"/>
</dbReference>
<dbReference type="PANTHER" id="PTHR24062">
    <property type="entry name" value="VOMERONASAL TYPE-1 RECEPTOR"/>
    <property type="match status" value="1"/>
</dbReference>
<dbReference type="Pfam" id="PF03402">
    <property type="entry name" value="V1R"/>
    <property type="match status" value="1"/>
</dbReference>
<dbReference type="PRINTS" id="PR01534">
    <property type="entry name" value="VOMERONASL1R"/>
</dbReference>
<dbReference type="SUPFAM" id="SSF81321">
    <property type="entry name" value="Family A G protein-coupled receptor-like"/>
    <property type="match status" value="1"/>
</dbReference>
<dbReference type="PROSITE" id="PS50262">
    <property type="entry name" value="G_PROTEIN_RECEP_F1_2"/>
    <property type="match status" value="1"/>
</dbReference>
<reference key="1">
    <citation type="journal article" date="2002" name="FEBS Lett.">
        <title>Identification of G protein-coupled receptor genes from the human genome sequence.</title>
        <authorList>
            <person name="Takeda S."/>
            <person name="Kadowaki S."/>
            <person name="Haga T."/>
            <person name="Takaesu H."/>
            <person name="Mitaku S."/>
        </authorList>
    </citation>
    <scope>NUCLEOTIDE SEQUENCE [LARGE SCALE GENOMIC DNA]</scope>
    <scope>TISSUE SPECIFICITY</scope>
</reference>
<protein>
    <recommendedName>
        <fullName>Putative vomeronasal receptor-like protein 4</fullName>
    </recommendedName>
    <alternativeName>
        <fullName>G-protein coupled receptor GPCR23</fullName>
        <shortName>hGPCR23</shortName>
    </alternativeName>
</protein>
<comment type="function">
    <text evidence="1">Putative pheromone receptor.</text>
</comment>
<comment type="subcellular location">
    <subcellularLocation>
        <location evidence="5">Cell membrane</location>
        <topology evidence="5">Multi-pass membrane protein</topology>
    </subcellularLocation>
</comment>
<comment type="tissue specificity">
    <text evidence="4">Expressed in olfactory nerve.</text>
</comment>
<comment type="similarity">
    <text evidence="3">Belongs to the G-protein coupled receptor 1 family.</text>
</comment>
<comment type="caution">
    <text evidence="5">Could be the product of a pseudogene.</text>
</comment>